<evidence type="ECO:0000255" key="1">
    <source>
        <dbReference type="HAMAP-Rule" id="MF_01345"/>
    </source>
</evidence>
<evidence type="ECO:0000305" key="2"/>
<accession>P0CE05</accession>
<accession>P28545</accession>
<dbReference type="EMBL" id="AE001273">
    <property type="protein sequence ID" value="AAC68120.1"/>
    <property type="molecule type" value="Genomic_DNA"/>
</dbReference>
<dbReference type="PIR" id="C42645">
    <property type="entry name" value="C42645"/>
</dbReference>
<dbReference type="RefSeq" id="NP_220034.1">
    <property type="nucleotide sequence ID" value="NC_000117.1"/>
</dbReference>
<dbReference type="RefSeq" id="WP_009871883.1">
    <property type="nucleotide sequence ID" value="NC_000117.1"/>
</dbReference>
<dbReference type="SMR" id="P0CE05"/>
<dbReference type="FunCoup" id="P0CE05">
    <property type="interactions" value="248"/>
</dbReference>
<dbReference type="STRING" id="272561.CT_519"/>
<dbReference type="EnsemblBacteria" id="AAC68120">
    <property type="protein sequence ID" value="AAC68120"/>
    <property type="gene ID" value="CT_519"/>
</dbReference>
<dbReference type="GeneID" id="884306"/>
<dbReference type="GeneID" id="93065358"/>
<dbReference type="KEGG" id="ctr:CT_519"/>
<dbReference type="PATRIC" id="fig|272561.5.peg.563"/>
<dbReference type="HOGENOM" id="CLU_073626_1_0_0"/>
<dbReference type="InParanoid" id="P0CE05"/>
<dbReference type="OrthoDB" id="9811714at2"/>
<dbReference type="Proteomes" id="UP000000431">
    <property type="component" value="Chromosome"/>
</dbReference>
<dbReference type="GO" id="GO:0022627">
    <property type="term" value="C:cytosolic small ribosomal subunit"/>
    <property type="evidence" value="ECO:0000318"/>
    <property type="project" value="GO_Central"/>
</dbReference>
<dbReference type="GO" id="GO:0019843">
    <property type="term" value="F:rRNA binding"/>
    <property type="evidence" value="ECO:0007669"/>
    <property type="project" value="UniProtKB-UniRule"/>
</dbReference>
<dbReference type="GO" id="GO:0003735">
    <property type="term" value="F:structural constituent of ribosome"/>
    <property type="evidence" value="ECO:0000318"/>
    <property type="project" value="GO_Central"/>
</dbReference>
<dbReference type="GO" id="GO:0006412">
    <property type="term" value="P:translation"/>
    <property type="evidence" value="ECO:0007669"/>
    <property type="project" value="UniProtKB-UniRule"/>
</dbReference>
<dbReference type="CDD" id="cd00364">
    <property type="entry name" value="Ribosomal_uS17"/>
    <property type="match status" value="1"/>
</dbReference>
<dbReference type="FunFam" id="2.40.50.140:FF:000462">
    <property type="entry name" value="30S ribosomal protein S17"/>
    <property type="match status" value="1"/>
</dbReference>
<dbReference type="Gene3D" id="2.40.50.140">
    <property type="entry name" value="Nucleic acid-binding proteins"/>
    <property type="match status" value="1"/>
</dbReference>
<dbReference type="HAMAP" id="MF_01345_B">
    <property type="entry name" value="Ribosomal_uS17_B"/>
    <property type="match status" value="1"/>
</dbReference>
<dbReference type="InterPro" id="IPR012340">
    <property type="entry name" value="NA-bd_OB-fold"/>
</dbReference>
<dbReference type="InterPro" id="IPR000266">
    <property type="entry name" value="Ribosomal_uS17"/>
</dbReference>
<dbReference type="InterPro" id="IPR019984">
    <property type="entry name" value="Ribosomal_uS17_bact/chlr"/>
</dbReference>
<dbReference type="InterPro" id="IPR019979">
    <property type="entry name" value="Ribosomal_uS17_CS"/>
</dbReference>
<dbReference type="NCBIfam" id="NF004123">
    <property type="entry name" value="PRK05610.1"/>
    <property type="match status" value="1"/>
</dbReference>
<dbReference type="NCBIfam" id="TIGR03635">
    <property type="entry name" value="uS17_bact"/>
    <property type="match status" value="1"/>
</dbReference>
<dbReference type="PANTHER" id="PTHR10744">
    <property type="entry name" value="40S RIBOSOMAL PROTEIN S11 FAMILY MEMBER"/>
    <property type="match status" value="1"/>
</dbReference>
<dbReference type="PANTHER" id="PTHR10744:SF1">
    <property type="entry name" value="SMALL RIBOSOMAL SUBUNIT PROTEIN US17M"/>
    <property type="match status" value="1"/>
</dbReference>
<dbReference type="Pfam" id="PF00366">
    <property type="entry name" value="Ribosomal_S17"/>
    <property type="match status" value="1"/>
</dbReference>
<dbReference type="PRINTS" id="PR00973">
    <property type="entry name" value="RIBOSOMALS17"/>
</dbReference>
<dbReference type="SUPFAM" id="SSF50249">
    <property type="entry name" value="Nucleic acid-binding proteins"/>
    <property type="match status" value="1"/>
</dbReference>
<dbReference type="PROSITE" id="PS00056">
    <property type="entry name" value="RIBOSOMAL_S17"/>
    <property type="match status" value="1"/>
</dbReference>
<sequence length="83" mass="9645">MASDVRGRRKTKIGVVVSSKMEKTVVVRVERVYSHPQYAKVVRDSSKYYAHNELDVKEGDTVRIQETRPLSKTKRWRVVGRVN</sequence>
<gene>
    <name evidence="1" type="primary">rpsQ</name>
    <name type="synonym">rs17</name>
    <name type="ordered locus">CT_519</name>
</gene>
<protein>
    <recommendedName>
        <fullName evidence="1">Small ribosomal subunit protein uS17</fullName>
    </recommendedName>
    <alternativeName>
        <fullName evidence="2">30S ribosomal protein S17</fullName>
    </alternativeName>
</protein>
<organism>
    <name type="scientific">Chlamydia trachomatis serovar D (strain ATCC VR-885 / DSM 19411 / UW-3/Cx)</name>
    <dbReference type="NCBI Taxonomy" id="272561"/>
    <lineage>
        <taxon>Bacteria</taxon>
        <taxon>Pseudomonadati</taxon>
        <taxon>Chlamydiota</taxon>
        <taxon>Chlamydiia</taxon>
        <taxon>Chlamydiales</taxon>
        <taxon>Chlamydiaceae</taxon>
        <taxon>Chlamydia/Chlamydophila group</taxon>
        <taxon>Chlamydia</taxon>
    </lineage>
</organism>
<feature type="chain" id="PRO_0000128455" description="Small ribosomal subunit protein uS17">
    <location>
        <begin position="1"/>
        <end position="83"/>
    </location>
</feature>
<reference key="1">
    <citation type="journal article" date="1998" name="Science">
        <title>Genome sequence of an obligate intracellular pathogen of humans: Chlamydia trachomatis.</title>
        <authorList>
            <person name="Stephens R.S."/>
            <person name="Kalman S."/>
            <person name="Lammel C.J."/>
            <person name="Fan J."/>
            <person name="Marathe R."/>
            <person name="Aravind L."/>
            <person name="Mitchell W.P."/>
            <person name="Olinger L."/>
            <person name="Tatusov R.L."/>
            <person name="Zhao Q."/>
            <person name="Koonin E.V."/>
            <person name="Davis R.W."/>
        </authorList>
    </citation>
    <scope>NUCLEOTIDE SEQUENCE [LARGE SCALE GENOMIC DNA]</scope>
    <source>
        <strain>ATCC VR-885 / DSM 19411 / UW-3/Cx</strain>
    </source>
</reference>
<keyword id="KW-1185">Reference proteome</keyword>
<keyword id="KW-0687">Ribonucleoprotein</keyword>
<keyword id="KW-0689">Ribosomal protein</keyword>
<keyword id="KW-0694">RNA-binding</keyword>
<keyword id="KW-0699">rRNA-binding</keyword>
<proteinExistence type="inferred from homology"/>
<comment type="function">
    <text evidence="1">One of the primary rRNA binding proteins, it binds specifically to the 5'-end of 16S ribosomal RNA.</text>
</comment>
<comment type="subunit">
    <text evidence="1">Part of the 30S ribosomal subunit.</text>
</comment>
<comment type="similarity">
    <text evidence="1">Belongs to the universal ribosomal protein uS17 family.</text>
</comment>
<name>RS17_CHLTR</name>